<evidence type="ECO:0000256" key="1">
    <source>
        <dbReference type="SAM" id="MobiDB-lite"/>
    </source>
</evidence>
<evidence type="ECO:0000269" key="2">
    <source>
    </source>
</evidence>
<evidence type="ECO:0000269" key="3">
    <source>
    </source>
</evidence>
<evidence type="ECO:0000269" key="4">
    <source>
    </source>
</evidence>
<evidence type="ECO:0000269" key="5">
    <source>
    </source>
</evidence>
<evidence type="ECO:0000269" key="6">
    <source>
    </source>
</evidence>
<evidence type="ECO:0000269" key="7">
    <source>
    </source>
</evidence>
<evidence type="ECO:0000269" key="8">
    <source>
    </source>
</evidence>
<evidence type="ECO:0000269" key="9">
    <source>
    </source>
</evidence>
<evidence type="ECO:0000269" key="10">
    <source>
    </source>
</evidence>
<evidence type="ECO:0000269" key="11">
    <source>
    </source>
</evidence>
<evidence type="ECO:0000269" key="12">
    <source>
    </source>
</evidence>
<evidence type="ECO:0000269" key="13">
    <source>
    </source>
</evidence>
<evidence type="ECO:0000305" key="14"/>
<sequence length="136" mass="15429">MARTKQTARKSTGAKAPRKQLASKAARKSAPATGGIKKPHRFRPGTVALREIRKYQKSTDLLIRKLPFQRLVRDIAHEFKAELRFQSSAVLALQEAAEAYLVGLFEDTNLCAIHARRVTIMTKDMQLARRIRGERF</sequence>
<dbReference type="EMBL" id="M87304">
    <property type="protein sequence ID" value="AAC37190.1"/>
    <property type="molecule type" value="Unassigned_DNA"/>
</dbReference>
<dbReference type="EMBL" id="M87504">
    <property type="protein sequence ID" value="AAC37189.1"/>
    <property type="molecule type" value="Unassigned_DNA"/>
</dbReference>
<dbReference type="EMBL" id="M11142">
    <property type="protein sequence ID" value="AAA30115.1"/>
    <property type="molecule type" value="Genomic_DNA"/>
</dbReference>
<dbReference type="EMBL" id="M11143">
    <property type="protein sequence ID" value="AAA30116.1"/>
    <property type="molecule type" value="Genomic_DNA"/>
</dbReference>
<dbReference type="PIR" id="S41499">
    <property type="entry name" value="S41499"/>
</dbReference>
<dbReference type="PIR" id="S42521">
    <property type="entry name" value="S42521"/>
</dbReference>
<dbReference type="PIR" id="S42522">
    <property type="entry name" value="S42522"/>
</dbReference>
<dbReference type="SMR" id="P69150"/>
<dbReference type="iPTMnet" id="P69150"/>
<dbReference type="OMA" id="HIFAEMA"/>
<dbReference type="GO" id="GO:0000786">
    <property type="term" value="C:nucleosome"/>
    <property type="evidence" value="ECO:0007669"/>
    <property type="project" value="UniProtKB-KW"/>
</dbReference>
<dbReference type="GO" id="GO:0005634">
    <property type="term" value="C:nucleus"/>
    <property type="evidence" value="ECO:0007669"/>
    <property type="project" value="UniProtKB-SubCell"/>
</dbReference>
<dbReference type="GO" id="GO:0003677">
    <property type="term" value="F:DNA binding"/>
    <property type="evidence" value="ECO:0007669"/>
    <property type="project" value="UniProtKB-KW"/>
</dbReference>
<dbReference type="GO" id="GO:0046982">
    <property type="term" value="F:protein heterodimerization activity"/>
    <property type="evidence" value="ECO:0007669"/>
    <property type="project" value="InterPro"/>
</dbReference>
<dbReference type="GO" id="GO:0030527">
    <property type="term" value="F:structural constituent of chromatin"/>
    <property type="evidence" value="ECO:0007669"/>
    <property type="project" value="InterPro"/>
</dbReference>
<dbReference type="CDD" id="cd22911">
    <property type="entry name" value="HFD_H3"/>
    <property type="match status" value="1"/>
</dbReference>
<dbReference type="FunFam" id="1.10.20.10:FF:000001">
    <property type="entry name" value="Histone H3"/>
    <property type="match status" value="1"/>
</dbReference>
<dbReference type="Gene3D" id="1.10.20.10">
    <property type="entry name" value="Histone, subunit A"/>
    <property type="match status" value="1"/>
</dbReference>
<dbReference type="InterPro" id="IPR009072">
    <property type="entry name" value="Histone-fold"/>
</dbReference>
<dbReference type="InterPro" id="IPR007125">
    <property type="entry name" value="Histone_H2A/H2B/H3"/>
</dbReference>
<dbReference type="InterPro" id="IPR000164">
    <property type="entry name" value="Histone_H3/CENP-A"/>
</dbReference>
<dbReference type="PANTHER" id="PTHR11426">
    <property type="entry name" value="HISTONE H3"/>
    <property type="match status" value="1"/>
</dbReference>
<dbReference type="Pfam" id="PF00125">
    <property type="entry name" value="Histone"/>
    <property type="match status" value="1"/>
</dbReference>
<dbReference type="PRINTS" id="PR00622">
    <property type="entry name" value="HISTONEH3"/>
</dbReference>
<dbReference type="SMART" id="SM00428">
    <property type="entry name" value="H3"/>
    <property type="match status" value="1"/>
</dbReference>
<dbReference type="SUPFAM" id="SSF47113">
    <property type="entry name" value="Histone-fold"/>
    <property type="match status" value="1"/>
</dbReference>
<dbReference type="PROSITE" id="PS00322">
    <property type="entry name" value="HISTONE_H3_1"/>
    <property type="match status" value="1"/>
</dbReference>
<dbReference type="PROSITE" id="PS00959">
    <property type="entry name" value="HISTONE_H3_2"/>
    <property type="match status" value="1"/>
</dbReference>
<proteinExistence type="evidence at protein level"/>
<keyword id="KW-0007">Acetylation</keyword>
<keyword id="KW-0158">Chromosome</keyword>
<keyword id="KW-0903">Direct protein sequencing</keyword>
<keyword id="KW-0238">DNA-binding</keyword>
<keyword id="KW-0488">Methylation</keyword>
<keyword id="KW-0544">Nucleosome core</keyword>
<keyword id="KW-0539">Nucleus</keyword>
<keyword id="KW-0597">Phosphoprotein</keyword>
<organism>
    <name type="scientific">Tetrahymena thermophila</name>
    <dbReference type="NCBI Taxonomy" id="5911"/>
    <lineage>
        <taxon>Eukaryota</taxon>
        <taxon>Sar</taxon>
        <taxon>Alveolata</taxon>
        <taxon>Ciliophora</taxon>
        <taxon>Intramacronucleata</taxon>
        <taxon>Oligohymenophorea</taxon>
        <taxon>Hymenostomatida</taxon>
        <taxon>Tetrahymenina</taxon>
        <taxon>Tetrahymenidae</taxon>
        <taxon>Tetrahymena</taxon>
    </lineage>
</organism>
<comment type="function">
    <text evidence="6 7">Core component of nucleosome. Nucleosomes wrap and compact DNA into chromatin, limiting DNA accessibility to the cellular machineries which require DNA as a template. Histones thereby play a central role in transcription regulation, DNA repair, DNA replication and chromosomal stability. DNA accessibility is regulated via a complex set of post-translational modifications of histones, also called histone code, and nucleosome remodeling. H3 is deposited into chromatin exclusively through a DNA replication-coupled pathway that can be associated with either DNA duplication or DNA repair synthesis during meiotic homologous recombination.</text>
</comment>
<comment type="subunit">
    <text evidence="5">The nucleosome is a histone octamer containing two molecules each of H2A, H2B, H3 and H4 assembled in one H3-H4 heterotetramer and two H2A-H2B heterodimers. The octamer wraps approximately 147 bp of DNA. Interacts with GCN5, whereby H3S10ph increases histone-protein interactions. Interacts with PDD1 and PDD3.</text>
</comment>
<comment type="subcellular location">
    <subcellularLocation>
        <location>Nucleus</location>
    </subcellularLocation>
    <subcellularLocation>
        <location>Chromosome</location>
    </subcellularLocation>
    <text>Localizes to both the large, transcriptionally active, somatic macronucleus (MAC) and the small, transcriptionally inert, germ line micronucleus (MIC).</text>
</comment>
<comment type="induction">
    <text evidence="7">Highly expressed in growing cells, but only at low levels in starved cells.</text>
</comment>
<comment type="PTM">
    <text evidence="2 13">Phosphorylated to form H3S10ph. H3S10ph promotes subsequent H3K14ac formation by GCN5. H3S10ph is only found in the mitotically dividing MIC, but not in the amitotically dividing MAC. H3S10ph is correlated with chromosome condensation during mitotic or meiotic micronuclear divisions.</text>
</comment>
<comment type="PTM">
    <text evidence="8 9 11 12">Acetylation of histone H3 leads to transcriptional activation. H3K14ac formation by GCN5 is promoted by H3S10ph. H3K9acK14ac is the preferred acetylated form of newly synthesized H3. Acetylation occurs almost exclusively in the MAC.</text>
</comment>
<comment type="PTM">
    <text evidence="3 4 6 8 9">Methylated to form H3K4me. H3K4me is only found in the transcriptionally active MAC. Methylated to form H3K9me in developing MACs during conjugation, when genome-wide DNA elimination occurs. At this stage, H3K9me specifically occurs on DNA sequences being eliminated (IES), probably targeted by small scan RNAs (scnRNAs) bound to IES, and is required for efficient IES elimination. H3K9me is required for the interaction with the chromodomains of PDD1 and PDD3.</text>
</comment>
<comment type="PTM">
    <text evidence="10">The full-length protein H3S (slow migrating) is converted to H3F (fast migrating) by proteolytic removal of the first 6 residues. H3F is unique to MIC, and processing seems to occur regularly each generation at a specific point in the cell cycle.</text>
</comment>
<comment type="similarity">
    <text evidence="14">Belongs to the histone H3 family.</text>
</comment>
<comment type="caution">
    <text evidence="14">To ensure consistency between histone entries, we follow the 'Brno' nomenclature for histone modifications, with positions referring to those used in the literature for the 'closest' model organism. Due to slight variations in histone sequences between organisms and to the presence of initiator methionine in UniProtKB/Swiss-Prot sequences, the actual positions of modified amino acids in the sequence generally differ. In this entry the following conventions are used: H3K4ac = acetylated Lys-5; H3K4me1/2/3 = mono-, di- and trimethylated Lys-5; H3K9ac = acetylated Lys-10; H3K9me3 = trimethylated Lys-10; H3S10ph = phosphorylated Ser-11; H3K14ac = acetylated Lys-15; H3K18ac = acetylated Lys-19; H3K23ac = acetylated Lys-24; H3K27ac = acetylated Lys-28; H3K27me1/2/3 = mono-, di- and trimethylated Lys-28; H3K36ac = acetylated Lys-37; H3K36me1/3/3 = mono-, di- and trimethylated Lys-37; H3K56ac = acetylated Lys-57; H3K56me1 = monomethylated Lys-57; H3K79me1 = monomethylated Lys-80.</text>
</comment>
<protein>
    <recommendedName>
        <fullName>Histone H3</fullName>
    </recommendedName>
    <alternativeName>
        <fullName>H3S</fullName>
    </alternativeName>
    <alternativeName>
        <fullName>Histone H3-I/H3-II</fullName>
    </alternativeName>
    <alternativeName>
        <fullName>Major histone H3</fullName>
    </alternativeName>
    <component>
        <recommendedName>
            <fullName>H3F</fullName>
        </recommendedName>
    </component>
</protein>
<feature type="initiator methionine" description="Removed" evidence="3 10">
    <location>
        <position position="1"/>
    </location>
</feature>
<feature type="chain" id="PRO_0000221330" description="Histone H3">
    <location>
        <begin position="2"/>
        <end position="136"/>
    </location>
</feature>
<feature type="chain" id="PRO_0000385010" description="H3F">
    <location>
        <begin position="8"/>
        <end position="136"/>
    </location>
</feature>
<feature type="region of interest" description="Disordered" evidence="1">
    <location>
        <begin position="1"/>
        <end position="43"/>
    </location>
</feature>
<feature type="modified residue" description="N6,N6,N6-trimethyllysine; alternate" evidence="3 9">
    <location>
        <position position="5"/>
    </location>
</feature>
<feature type="modified residue" description="N6,N6-dimethyllysine; alternate" evidence="3 9">
    <location>
        <position position="5"/>
    </location>
</feature>
<feature type="modified residue" description="N6-acetyllysine; alternate" evidence="9">
    <location>
        <position position="5"/>
    </location>
</feature>
<feature type="modified residue" description="N6-methyllysine; alternate" evidence="3 9">
    <location>
        <position position="5"/>
    </location>
</feature>
<feature type="modified residue" description="N6,N6,N6-trimethyllysine; alternate" evidence="4 6 9">
    <location>
        <position position="10"/>
    </location>
</feature>
<feature type="modified residue" description="N6-acetyllysine; alternate" evidence="9 12">
    <location>
        <position position="10"/>
    </location>
</feature>
<feature type="modified residue" description="Phosphoserine" evidence="2 13">
    <location>
        <position position="11"/>
    </location>
</feature>
<feature type="modified residue" description="N6-acetyllysine" evidence="9 12">
    <location>
        <position position="15"/>
    </location>
</feature>
<feature type="modified residue" description="N6-acetyllysine" evidence="9">
    <location>
        <position position="19"/>
    </location>
</feature>
<feature type="modified residue" description="N6-acetyllysine" evidence="9">
    <location>
        <position position="24"/>
    </location>
</feature>
<feature type="modified residue" description="N6,N6,N6-trimethyllysine; alternate" evidence="9">
    <location>
        <position position="28"/>
    </location>
</feature>
<feature type="modified residue" description="N6,N6-dimethyllysine; alternate" evidence="9">
    <location>
        <position position="28"/>
    </location>
</feature>
<feature type="modified residue" description="N6-acetyllysine; alternate" evidence="9">
    <location>
        <position position="28"/>
    </location>
</feature>
<feature type="modified residue" description="N6-methyllysine; alternate" evidence="9">
    <location>
        <position position="28"/>
    </location>
</feature>
<feature type="modified residue" description="N6,N6,N6-trimethyllysine; alternate" evidence="8 9">
    <location>
        <position position="37"/>
    </location>
</feature>
<feature type="modified residue" description="N6,N6-dimethyllysine; alternate" evidence="8 9">
    <location>
        <position position="37"/>
    </location>
</feature>
<feature type="modified residue" description="N6-acetyllysine; alternate" evidence="8 9">
    <location>
        <position position="37"/>
    </location>
</feature>
<feature type="modified residue" description="N6-methyllysine; alternate" evidence="8 9">
    <location>
        <position position="37"/>
    </location>
</feature>
<feature type="modified residue" description="N6-acetyllysine; alternate" evidence="9">
    <location>
        <position position="57"/>
    </location>
</feature>
<feature type="modified residue" description="N6-methyllysine; alternate" evidence="9">
    <location>
        <position position="57"/>
    </location>
</feature>
<feature type="modified residue" description="N6-methyllysine" evidence="9">
    <location>
        <position position="80"/>
    </location>
</feature>
<feature type="mutagenesis site" description="Reduces greatly IES elimination." evidence="6">
    <original>K</original>
    <variation>Q</variation>
    <location>
        <position position="10"/>
    </location>
</feature>
<feature type="mutagenesis site" description="Causes abnormal chromosome condensation and segregation in MIC nuclear divisions." evidence="2">
    <original>S</original>
    <variation>A</variation>
    <location>
        <position position="11"/>
    </location>
</feature>
<feature type="sequence conflict" description="In Ref. 3; AA sequence." evidence="14" ref="3">
    <original>Q</original>
    <variation>N</variation>
    <location>
        <position position="6"/>
    </location>
</feature>
<feature type="sequence conflict" description="In Ref. 2; AAA30115." evidence="14" ref="2">
    <original>F</original>
    <variation>S</variation>
    <location>
        <position position="68"/>
    </location>
</feature>
<accession>P69150</accession>
<accession>P15511</accession>
<accession>P92147</accession>
<accession>Q95047</accession>
<reference key="1">
    <citation type="journal article" date="1994" name="Nucleic Acids Res.">
        <title>Independent evolutionary origin of histone H3.3-like variants of animals and Tetrahymena.</title>
        <authorList>
            <person name="Thatcher T.H."/>
            <person name="MacGaffey J."/>
            <person name="Bowen J.K."/>
            <person name="Horowitz S."/>
            <person name="Shapiro D.L."/>
            <person name="Gorovsky M.A."/>
        </authorList>
    </citation>
    <scope>NUCLEOTIDE SEQUENCE (HHT1 AND HHT2)</scope>
</reference>
<reference key="2">
    <citation type="journal article" date="1985" name="Proc. Natl. Acad. Sci. U.S.A.">
        <title>An unusual genetic code in nuclear genes of Tetrahymena.</title>
        <authorList>
            <person name="Horowitz S."/>
            <person name="Gorovsky M.A."/>
        </authorList>
    </citation>
    <scope>NUCLEOTIDE SEQUENCE [GENOMIC DNA] OF 1-76 (HHT1 AND HHT2)</scope>
</reference>
<reference key="3">
    <citation type="journal article" date="1999" name="Proc. Natl. Acad. Sci. U.S.A.">
        <title>Methylation of histone H3 at lysine 4 is highly conserved and correlates with transcriptionally active nuclei in Tetrahymena.</title>
        <authorList>
            <person name="Strahl B.D."/>
            <person name="Ohba R."/>
            <person name="Cook R.G."/>
            <person name="Allis C.D."/>
        </authorList>
    </citation>
    <scope>PROTEIN SEQUENCE OF 2-39</scope>
    <scope>METHYLATION AT LYS-5</scope>
</reference>
<reference key="4">
    <citation type="journal article" date="1980" name="Cell">
        <title>Proteolytic processing of histone H3 in chromatin: a physiologically regulated event in Tetrahymena micronuclei.</title>
        <authorList>
            <person name="Allis C.D."/>
            <person name="Bowen J.K."/>
            <person name="Abraham G.N."/>
            <person name="Glover C.V.C."/>
            <person name="Gorovsky M.A."/>
        </authorList>
    </citation>
    <scope>PROTEIN SEQUENCE OF 2-22</scope>
    <scope>PROTEOLYTIC CLEAVAGE</scope>
</reference>
<reference key="5">
    <citation type="journal article" date="1998" name="Proc. Natl. Acad. Sci. U.S.A.">
        <title>Phosphorylation of histone H3 at serine 10 is correlated with chromosome condensation during mitosis and meiosis in Tetrahymena.</title>
        <authorList>
            <person name="Wei Y."/>
            <person name="Mizzen C.A."/>
            <person name="Cook R.G."/>
            <person name="Gorovsky M.A."/>
            <person name="Allis C.D."/>
        </authorList>
    </citation>
    <scope>PROTEIN SEQUENCE OF 8-32</scope>
    <scope>PHOSPHORYLATION AT SER-11</scope>
    <scope>SUBCELLULAR LOCATION</scope>
</reference>
<reference key="6">
    <citation type="journal article" date="1982" name="J. Biol. Chem.">
        <title>Regulation of histone acetylation in Tetrahymena macro- and micronuclei.</title>
        <authorList>
            <person name="Vavra K.J."/>
            <person name="Allis C.D."/>
            <person name="Gorovsky M.A."/>
        </authorList>
    </citation>
    <scope>ACETYLATION</scope>
</reference>
<reference key="7">
    <citation type="journal article" date="1995" name="Proc. Natl. Acad. Sci. U.S.A.">
        <title>Conservation of deposition-related acetylation sites in newly synthesized histones H3 and H4.</title>
        <authorList>
            <person name="Sobel R.E."/>
            <person name="Cook R.G."/>
            <person name="Perry C.A."/>
            <person name="Annunziato A.T."/>
            <person name="Allis C.D."/>
        </authorList>
    </citation>
    <scope>ACETYLATION AT LYS-10 AND LYS-15</scope>
</reference>
<reference key="8">
    <citation type="journal article" date="1999" name="Cell">
        <title>Phosphorylation of histone H3 is required for proper chromosome condensation and segregation.</title>
        <authorList>
            <person name="Wei Y."/>
            <person name="Yu L."/>
            <person name="Bowen J."/>
            <person name="Gorovsky M.A."/>
            <person name="Allis C.D."/>
        </authorList>
    </citation>
    <scope>PHOSPHORYLATION AT SER-11</scope>
    <scope>MUTAGENESIS OF SER-11</scope>
</reference>
<reference key="9">
    <citation type="journal article" date="2002" name="Cell">
        <title>Methylation of histone H3 at lysine 9 targets programmed DNA elimination in Tetrahymena.</title>
        <authorList>
            <person name="Taverna S.D."/>
            <person name="Coyne R.S."/>
            <person name="Allis C.D."/>
        </authorList>
    </citation>
    <scope>METHYLATION AT LYS-10</scope>
    <scope>SUBCELLULAR LOCATION</scope>
</reference>
<reference key="10">
    <citation type="journal article" date="2003" name="Mol. Cell">
        <title>Structural basis for histone and phosphohistone binding by the GCN5 histone acetyltransferase.</title>
        <authorList>
            <person name="Clements A."/>
            <person name="Poux A.N."/>
            <person name="Lo W.-S."/>
            <person name="Pillus L."/>
            <person name="Berger S.L."/>
            <person name="Marmorstein R."/>
        </authorList>
    </citation>
    <scope>INTERACTION WITH GCN5</scope>
</reference>
<reference key="11">
    <citation type="journal article" date="2004" name="Proc. Natl. Acad. Sci. U.S.A.">
        <title>Histone H3 lysine 9 methylation is required for DNA elimination in developing macronuclei in Tetrahymena.</title>
        <authorList>
            <person name="Liu Y."/>
            <person name="Mochizuki K."/>
            <person name="Gorovsky M.A."/>
        </authorList>
    </citation>
    <scope>FUNCTION</scope>
    <scope>METHYLATION AT LYS-10</scope>
    <scope>MUTAGENESIS OF LYS-10</scope>
</reference>
<reference key="12">
    <citation type="journal article" date="2006" name="Mol. Cell. Biol.">
        <title>Deposition and function of histone H3 variants in Tetrahymena thermophila.</title>
        <authorList>
            <person name="Cui B."/>
            <person name="Liu Y."/>
            <person name="Gorovsky M.A."/>
        </authorList>
    </citation>
    <scope>FUNCTION</scope>
    <scope>INDUCTION</scope>
    <scope>SUBCELLULAR LOCATION</scope>
</reference>
<reference key="13">
    <citation type="journal article" date="2007" name="J. Biol. Chem.">
        <title>Identification of histone H3 lysine 36 acetylation as a highly conserved histone modification.</title>
        <authorList>
            <person name="Morris S.A."/>
            <person name="Rao B."/>
            <person name="Garcia B.A."/>
            <person name="Hake S.B."/>
            <person name="Diaz R.L."/>
            <person name="Shabanowitz J."/>
            <person name="Hunt D.F."/>
            <person name="Allis C.D."/>
            <person name="Lieb J.D."/>
            <person name="Strahl B.D."/>
        </authorList>
    </citation>
    <scope>ACETYLATION AT LYS-37</scope>
    <scope>METHYLATION AT LYS-37</scope>
</reference>
<reference key="14">
    <citation type="journal article" date="2007" name="J. Biol. Chem.">
        <title>Organismal differences in post-translational modifications in histones H3 and H4.</title>
        <authorList>
            <person name="Garcia B.A."/>
            <person name="Hake S.B."/>
            <person name="Diaz R.L."/>
            <person name="Kauer M."/>
            <person name="Morris S.A."/>
            <person name="Recht J."/>
            <person name="Shabanowitz J."/>
            <person name="Mishra N."/>
            <person name="Strahl B.D."/>
            <person name="Allis C.D."/>
            <person name="Hunt D.F."/>
        </authorList>
    </citation>
    <scope>ACETYLATION AT LYS-5; LYS-10; LYS-15; LYS-19; LYS-24; LYS-28; LYS-37 AND LYS-57</scope>
    <scope>METHYLATION AT LYS-5; LYS-10; LYS-28; LYS-37; LYS-57 AND LYS-80</scope>
    <scope>IDENTIFICATION BY MASS SPECTROMETRY</scope>
</reference>
<gene>
    <name type="primary">HHT1</name>
    <name type="ORF">TTHERM_00570560</name>
</gene>
<gene>
    <name type="primary">HHT2</name>
    <name type="ORF">TTHERM_00189180</name>
</gene>
<name>H31_TETTH</name>